<dbReference type="EMBL" id="CP000653">
    <property type="protein sequence ID" value="ABP61352.1"/>
    <property type="molecule type" value="Genomic_DNA"/>
</dbReference>
<dbReference type="RefSeq" id="WP_015959685.1">
    <property type="nucleotide sequence ID" value="NC_009436.1"/>
</dbReference>
<dbReference type="SMR" id="A4WCC2"/>
<dbReference type="STRING" id="399742.Ent638_2686"/>
<dbReference type="KEGG" id="ent:Ent638_2686"/>
<dbReference type="eggNOG" id="COG0841">
    <property type="taxonomic scope" value="Bacteria"/>
</dbReference>
<dbReference type="HOGENOM" id="CLU_002755_1_2_6"/>
<dbReference type="OrthoDB" id="9757904at2"/>
<dbReference type="Proteomes" id="UP000000230">
    <property type="component" value="Chromosome"/>
</dbReference>
<dbReference type="GO" id="GO:0005886">
    <property type="term" value="C:plasma membrane"/>
    <property type="evidence" value="ECO:0007669"/>
    <property type="project" value="UniProtKB-SubCell"/>
</dbReference>
<dbReference type="GO" id="GO:0042910">
    <property type="term" value="F:xenobiotic transmembrane transporter activity"/>
    <property type="evidence" value="ECO:0007669"/>
    <property type="project" value="TreeGrafter"/>
</dbReference>
<dbReference type="FunFam" id="1.20.1640.10:FF:000001">
    <property type="entry name" value="Efflux pump membrane transporter"/>
    <property type="match status" value="1"/>
</dbReference>
<dbReference type="FunFam" id="3.30.70.1430:FF:000001">
    <property type="entry name" value="Efflux pump membrane transporter"/>
    <property type="match status" value="1"/>
</dbReference>
<dbReference type="FunFam" id="3.30.2090.10:FF:000004">
    <property type="entry name" value="Multidrug resistance protein MdtC"/>
    <property type="match status" value="1"/>
</dbReference>
<dbReference type="FunFam" id="3.30.2090.10:FF:000005">
    <property type="entry name" value="Multidrug resistance protein MdtC"/>
    <property type="match status" value="1"/>
</dbReference>
<dbReference type="Gene3D" id="3.30.70.1430">
    <property type="entry name" value="Multidrug efflux transporter AcrB pore domain"/>
    <property type="match status" value="2"/>
</dbReference>
<dbReference type="Gene3D" id="3.30.70.1440">
    <property type="entry name" value="Multidrug efflux transporter AcrB pore domain"/>
    <property type="match status" value="1"/>
</dbReference>
<dbReference type="Gene3D" id="3.30.70.1320">
    <property type="entry name" value="Multidrug efflux transporter AcrB pore domain like"/>
    <property type="match status" value="1"/>
</dbReference>
<dbReference type="Gene3D" id="3.30.2090.10">
    <property type="entry name" value="Multidrug efflux transporter AcrB TolC docking domain, DN and DC subdomains"/>
    <property type="match status" value="2"/>
</dbReference>
<dbReference type="Gene3D" id="1.20.1640.10">
    <property type="entry name" value="Multidrug efflux transporter AcrB transmembrane domain"/>
    <property type="match status" value="2"/>
</dbReference>
<dbReference type="HAMAP" id="MF_01424">
    <property type="entry name" value="MdtC"/>
    <property type="match status" value="1"/>
</dbReference>
<dbReference type="InterPro" id="IPR027463">
    <property type="entry name" value="AcrB_DN_DC_subdom"/>
</dbReference>
<dbReference type="InterPro" id="IPR001036">
    <property type="entry name" value="Acrflvin-R"/>
</dbReference>
<dbReference type="InterPro" id="IPR023931">
    <property type="entry name" value="Multidrug-R_MdtC"/>
</dbReference>
<dbReference type="NCBIfam" id="NF007905">
    <property type="entry name" value="PRK10614.1"/>
    <property type="match status" value="1"/>
</dbReference>
<dbReference type="NCBIfam" id="NF033617">
    <property type="entry name" value="RND_permease_2"/>
    <property type="match status" value="1"/>
</dbReference>
<dbReference type="PANTHER" id="PTHR32063">
    <property type="match status" value="1"/>
</dbReference>
<dbReference type="PANTHER" id="PTHR32063:SF34">
    <property type="entry name" value="MULTIDRUG RESISTANCE PROTEIN MDTC"/>
    <property type="match status" value="1"/>
</dbReference>
<dbReference type="Pfam" id="PF00873">
    <property type="entry name" value="ACR_tran"/>
    <property type="match status" value="1"/>
</dbReference>
<dbReference type="PRINTS" id="PR00702">
    <property type="entry name" value="ACRIFLAVINRP"/>
</dbReference>
<dbReference type="SUPFAM" id="SSF82693">
    <property type="entry name" value="Multidrug efflux transporter AcrB pore domain, PN1, PN2, PC1 and PC2 subdomains"/>
    <property type="match status" value="4"/>
</dbReference>
<dbReference type="SUPFAM" id="SSF82714">
    <property type="entry name" value="Multidrug efflux transporter AcrB TolC docking domain, DN and DC subdomains"/>
    <property type="match status" value="2"/>
</dbReference>
<dbReference type="SUPFAM" id="SSF82866">
    <property type="entry name" value="Multidrug efflux transporter AcrB transmembrane domain"/>
    <property type="match status" value="2"/>
</dbReference>
<sequence length="1025" mass="110886">MKFFALFIYRPVATILIAVAITLCGVLGFRLLPVAPLPQVDFPVIMISASLPGASPETMASSVATPLERSLGRIAGVNEMTSSSSLGSTRIILEFNFNRDINGAARDVQAAINAAQSLLPSGMPSRPTYRKANPSDAPIMILTLTSDTYSQGELYDFASTQLAQTIAQIDGVGDVDVGGSSLPAVRVGLNPEALFNQGVSLDDVRSAISNANVRKPQGAIEDSSHRWQIQTNDELKTAAEYQPLIIHYNNGAAVRLSDVASVTDSVQDVRNAGMTNAKPAILLMIRKLPEANIIQTVNSIRARLPELQETIPAAIDLQIAQDRSPTIRASLEEVEQTLVISIALVILVVFLFLRSGRATLIPAVAVPVSLIGTFAAMYLCGFSLNNLSLMALTIATGFVVDDAIVVLENISRHLEAGMKPLQASLQGTREVGFTVLSMSVSLVAVFLPLLLMGGLPGRLLREFAVTLSVAIGISLVISLTLTPMMCGWMLKRSKPHSQPRNKGFGRVLVAMQEGYGKSLKWVLNHTRIVGLVLVGTIALNVWMYITIPKTFFPEQDTGVLMGGIQADQSISFQAMRVKLQDFMKIIREDPAVDNVTGFTGGSRVNSGMMFITLKARGERNETAQQVIDRLRGKLAKEPGANLFLMAVQDIRVGGRQSNASYQYTLLSDDLAALREWEPKIRKALAAMPELADVNSDQQDNGAEMNLTYDRETMSRLGIDVAAANSLLNNAFGQRQISTIYQPMNQYKVVMEVDPRYTQDISALDKMYVINNDGKSIPLSYFASWQPANAPLSVNHQGLSAASTISFNLPTGSSLSEASDAINRTMTQLGVPSTVRGSFAGTAQVFQDTMNSQVILILAAIATVYIVLGILYESYVHPLTILSTLPSAGVGALLALELFDAPFSLIALIGIMLLIGIVKKNAIMMVDFALDAQRNGNMSPQDAIFQACILRFRPIMMTTLAALFGALPLVISSGDGSELRQPLGITIVGGLAMSQLLTLYTTPVVYLFFDRLRVRFSRKNRTTVTE</sequence>
<name>MDTC_ENT38</name>
<gene>
    <name evidence="1" type="primary">mdtC</name>
    <name type="ordered locus">Ent638_2686</name>
</gene>
<feature type="chain" id="PRO_1000068508" description="Multidrug resistance protein MdtC">
    <location>
        <begin position="1"/>
        <end position="1025"/>
    </location>
</feature>
<feature type="transmembrane region" description="Helical" evidence="1">
    <location>
        <begin position="3"/>
        <end position="23"/>
    </location>
</feature>
<feature type="transmembrane region" description="Helical" evidence="1">
    <location>
        <begin position="333"/>
        <end position="353"/>
    </location>
</feature>
<feature type="transmembrane region" description="Helical" evidence="1">
    <location>
        <begin position="360"/>
        <end position="380"/>
    </location>
</feature>
<feature type="transmembrane region" description="Helical" evidence="1">
    <location>
        <begin position="387"/>
        <end position="407"/>
    </location>
</feature>
<feature type="transmembrane region" description="Helical" evidence="1">
    <location>
        <begin position="431"/>
        <end position="451"/>
    </location>
</feature>
<feature type="transmembrane region" description="Helical" evidence="1">
    <location>
        <begin position="463"/>
        <end position="483"/>
    </location>
</feature>
<feature type="transmembrane region" description="Helical" evidence="1">
    <location>
        <begin position="528"/>
        <end position="548"/>
    </location>
</feature>
<feature type="transmembrane region" description="Helical" evidence="1">
    <location>
        <begin position="853"/>
        <end position="873"/>
    </location>
</feature>
<feature type="transmembrane region" description="Helical" evidence="1">
    <location>
        <begin position="875"/>
        <end position="895"/>
    </location>
</feature>
<feature type="transmembrane region" description="Helical" evidence="1">
    <location>
        <begin position="897"/>
        <end position="917"/>
    </location>
</feature>
<feature type="transmembrane region" description="Helical" evidence="1">
    <location>
        <begin position="953"/>
        <end position="973"/>
    </location>
</feature>
<feature type="transmembrane region" description="Helical" evidence="1">
    <location>
        <begin position="984"/>
        <end position="1004"/>
    </location>
</feature>
<evidence type="ECO:0000255" key="1">
    <source>
        <dbReference type="HAMAP-Rule" id="MF_01424"/>
    </source>
</evidence>
<comment type="subunit">
    <text evidence="1">Part of a tripartite efflux system composed of MdtA, MdtB and MdtC. MdtC forms a heteromultimer with MdtB.</text>
</comment>
<comment type="subcellular location">
    <subcellularLocation>
        <location evidence="1">Cell inner membrane</location>
        <topology evidence="1">Multi-pass membrane protein</topology>
    </subcellularLocation>
</comment>
<comment type="similarity">
    <text evidence="1">Belongs to the resistance-nodulation-cell division (RND) (TC 2.A.6) family. MdtC subfamily.</text>
</comment>
<organism>
    <name type="scientific">Enterobacter sp. (strain 638)</name>
    <dbReference type="NCBI Taxonomy" id="399742"/>
    <lineage>
        <taxon>Bacteria</taxon>
        <taxon>Pseudomonadati</taxon>
        <taxon>Pseudomonadota</taxon>
        <taxon>Gammaproteobacteria</taxon>
        <taxon>Enterobacterales</taxon>
        <taxon>Enterobacteriaceae</taxon>
        <taxon>Enterobacter</taxon>
    </lineage>
</organism>
<reference key="1">
    <citation type="journal article" date="2010" name="PLoS Genet.">
        <title>Genome sequence of the plant growth promoting endophytic bacterium Enterobacter sp. 638.</title>
        <authorList>
            <person name="Taghavi S."/>
            <person name="van der Lelie D."/>
            <person name="Hoffman A."/>
            <person name="Zhang Y.B."/>
            <person name="Walla M.D."/>
            <person name="Vangronsveld J."/>
            <person name="Newman L."/>
            <person name="Monchy S."/>
        </authorList>
    </citation>
    <scope>NUCLEOTIDE SEQUENCE [LARGE SCALE GENOMIC DNA]</scope>
    <source>
        <strain>638</strain>
    </source>
</reference>
<accession>A4WCC2</accession>
<protein>
    <recommendedName>
        <fullName evidence="1">Multidrug resistance protein MdtC</fullName>
    </recommendedName>
    <alternativeName>
        <fullName evidence="1">Multidrug transporter MdtC</fullName>
    </alternativeName>
</protein>
<keyword id="KW-0997">Cell inner membrane</keyword>
<keyword id="KW-1003">Cell membrane</keyword>
<keyword id="KW-0472">Membrane</keyword>
<keyword id="KW-0812">Transmembrane</keyword>
<keyword id="KW-1133">Transmembrane helix</keyword>
<keyword id="KW-0813">Transport</keyword>
<proteinExistence type="inferred from homology"/>